<organism>
    <name type="scientific">Hypocrea jecorina</name>
    <name type="common">Trichoderma reesei</name>
    <dbReference type="NCBI Taxonomy" id="51453"/>
    <lineage>
        <taxon>Eukaryota</taxon>
        <taxon>Fungi</taxon>
        <taxon>Dikarya</taxon>
        <taxon>Ascomycota</taxon>
        <taxon>Pezizomycotina</taxon>
        <taxon>Sordariomycetes</taxon>
        <taxon>Hypocreomycetidae</taxon>
        <taxon>Hypocreales</taxon>
        <taxon>Hypocreaceae</taxon>
        <taxon>Trichoderma</taxon>
    </lineage>
</organism>
<proteinExistence type="evidence at protein level"/>
<sequence length="471" mass="49653">MIVGILTTLATLATLAASVPLEERQACSSVWGQCGGQNWSGPTCCASGSTCVYSNDYYSQCLPGAASSSSSTRAASTTSRVSPTTSRSSSATPPPGSTTTRVPPVGSGTATYSGNPFVGVTPWANAYYASEVSSLAIPSLTGAMATAAAAVAKVPSFMWLDTLDKTPLMEQTLADIRTANKNGGNYAGQFVVYDLPDRDCAALASNGEYSIADGGVAKYKNYIDTIRQIVVEYSDIRTLLVIEPDSLANLVTNLGTPKCANAQSAYLECINYAVTQLNLPNVAMYLDAGHAGWLGWPANQDPAAQLFANVYKNASSPRALRGLATNVANYNGWNITSPPSYTQGNAVYNEKLYIHAIGPLLANHGWSNAFFITDQGRSGKQPTGQQQWGDWCNVIGTGFGIRPSANTGDSLLDSFVWVKPGGECDGTSDSSAPRFDSHCALPDALQPAPQAGAWFQAYFVQLLTNANPSFL</sequence>
<comment type="function">
    <text evidence="9 10">Exocellobiohydrolases (CBH) that catalyzes the hydrolysis of 1,4-beta-D-glucosidic bonds in cellulose to release the disaccharide cellobiose (Ref.3). The degradation of cellulose involves an interplay between different cellulolytic enzymes. Hydrolysis starts with endoglucanases (EGs), which cut internal beta-1,4-glucosidic bonds in cellulose to reduce the polymerization degree of the substrate and create new chain ends for exocellobiohydrolases (CBHs). The CBHs release the disaccharide cellobiose from the non-reducing end of the cellulose polymer chain. Finally, beta-1,4-glucosidases hydrolyze the cellobiose and other short cello-oligosaccharides into glucose units (Probable).</text>
</comment>
<comment type="catalytic activity">
    <reaction evidence="9">
        <text>Hydrolysis of (1-&gt;4)-beta-D-glucosidic linkages in cellulose and cellotetraose, releasing cellobiose from the non-reducing ends of the chains.</text>
        <dbReference type="EC" id="3.2.1.91"/>
    </reaction>
</comment>
<comment type="biophysicochemical properties">
    <kinetics>
        <KM evidence="5">17 uM for cellotriose</KM>
        <KM evidence="5">2.6 uM for cellotetraose</KM>
        <KM evidence="5">1.3 uM for cellopentaose</KM>
        <KM evidence="5">14 uM for cellohexaose</KM>
        <text evidence="5">kcat is 0.06 sec(-1) with cellotriose as substrate, 4.1 sec(-1) with cellotetraose as substrate, 1.1 sec(-1) with cellopentaose as substrate and 14 sec(-1) with cellopentaose as substrate.</text>
    </kinetics>
    <phDependence>
        <text evidence="5">Optimum pH is 4-6.</text>
    </phDependence>
</comment>
<comment type="interaction">
    <interactant intactId="EBI-8155616">
        <id>P07987</id>
    </interactant>
    <interactant intactId="EBI-8155616">
        <id>P07987</id>
        <label>cbh2</label>
    </interactant>
    <organismsDiffer>false</organismsDiffer>
    <experiments>2</experiments>
</comment>
<comment type="subcellular location">
    <subcellularLocation>
        <location evidence="9">Secreted</location>
    </subcellularLocation>
</comment>
<comment type="domain">
    <text evidence="10">The enzyme consists of two functional domains, a catalytic core joined to a carbohydrate-binding domain (CBM) by a serine-, threonine-, and proline-rich, highly glycosylated linker sequence.</text>
</comment>
<comment type="PTM">
    <text evidence="1">Asn-334 contains mainly a high-mannose-type glycan (Hex(7-9)GlcNAc(2)) in a 3:1 ration with a single GlcNAc. Asn-313 was primarily unglycosylated with a small fraction (18%) bearing a single GlcNAc at this site.</text>
</comment>
<comment type="miscellaneous">
    <text>T.reesei produces two different exocellobiohydrolases. They are unique in that they can hydrolyze crystalline cellulose in the absence of endoglucanases.</text>
</comment>
<comment type="similarity">
    <text evidence="10">Belongs to the glycosyl hydrolase 6 (cellulase B) family.</text>
</comment>
<feature type="signal peptide" evidence="2">
    <location>
        <begin position="1"/>
        <end position="18"/>
    </location>
</feature>
<feature type="propeptide" id="PRO_0000441277" evidence="9">
    <location>
        <begin position="19"/>
        <end position="24"/>
    </location>
</feature>
<feature type="chain" id="PRO_0000007911" description="Exoglucanase 2">
    <location>
        <begin position="25"/>
        <end position="471"/>
    </location>
</feature>
<feature type="domain" description="CBM1" evidence="3">
    <location>
        <begin position="26"/>
        <end position="62"/>
    </location>
</feature>
<feature type="region of interest" description="Disordered" evidence="4">
    <location>
        <begin position="64"/>
        <end position="108"/>
    </location>
</feature>
<feature type="region of interest" description="Linker" evidence="10">
    <location>
        <begin position="66"/>
        <end position="106"/>
    </location>
</feature>
<feature type="region of interest" description="Catalytic" evidence="11">
    <location>
        <begin position="107"/>
        <end position="471"/>
    </location>
</feature>
<feature type="compositionally biased region" description="Low complexity" evidence="4">
    <location>
        <begin position="64"/>
        <end position="101"/>
    </location>
</feature>
<feature type="active site" description="Proton donor" evidence="5">
    <location>
        <position position="245"/>
    </location>
</feature>
<feature type="site" description="Not glycosylated" evidence="1">
    <location>
        <position position="38"/>
    </location>
</feature>
<feature type="site" description="Transition state stabilizer that also modulates the pKa of Asp-245 and may act as a proton acceptor through a water chain" evidence="6">
    <location>
        <position position="199"/>
    </location>
</feature>
<feature type="modified residue" description="Pyrrolidone carboxylic acid" evidence="8">
    <location>
        <position position="25"/>
    </location>
</feature>
<feature type="glycosylation site" description="O-linked (Man...) threonine" evidence="5 7">
    <location>
        <position position="111"/>
    </location>
</feature>
<feature type="glycosylation site" description="O-linked (Man...) threonine" evidence="5 7">
    <location>
        <position position="121"/>
    </location>
</feature>
<feature type="glycosylation site" description="O-linked (Man...) serine" evidence="5 7">
    <location>
        <position position="130"/>
    </location>
</feature>
<feature type="glycosylation site" description="O-linked (Man...) serine" evidence="5 7">
    <location>
        <position position="133"/>
    </location>
</feature>
<feature type="glycosylation site" description="O-linked (Man...) serine" evidence="5 7">
    <location>
        <position position="134"/>
    </location>
</feature>
<feature type="glycosylation site" description="O-linked (Man...) serine" evidence="5 7">
    <location>
        <position position="139"/>
    </location>
</feature>
<feature type="glycosylation site" description="O-linked (Man...) threonine" evidence="5 7">
    <location>
        <position position="146"/>
    </location>
</feature>
<feature type="glycosylation site" description="N-linked (GlcNAc) asparagine" evidence="5 7">
    <location>
        <position position="313"/>
    </location>
</feature>
<feature type="glycosylation site" description="N-linked (GlcNAc...) (high mannose) asparagine" evidence="5 7">
    <location>
        <position position="334"/>
    </location>
</feature>
<feature type="disulfide bond" evidence="5 7">
    <location>
        <begin position="200"/>
        <end position="259"/>
    </location>
</feature>
<feature type="disulfide bond" evidence="5 7">
    <location>
        <begin position="392"/>
        <end position="439"/>
    </location>
</feature>
<feature type="mutagenesis site" description="20% of wild-type activity." evidence="6">
    <original>D</original>
    <variation>A</variation>
    <location>
        <position position="199"/>
    </location>
</feature>
<feature type="mutagenesis site" description="No measurable activity." evidence="6">
    <original>D</original>
    <variation>A</variation>
    <location>
        <position position="245"/>
    </location>
</feature>
<feature type="sequence conflict" description="In Ref. 2; AAA72922." evidence="10" ref="2">
    <original>P</original>
    <variation>R</variation>
    <location>
        <position position="359"/>
    </location>
</feature>
<feature type="sequence conflict" description="In Ref. 2; AAA72922." evidence="10" ref="2">
    <original>P</original>
    <variation>A</variation>
    <location>
        <position position="449"/>
    </location>
</feature>
<feature type="turn" evidence="18">
    <location>
        <begin position="116"/>
        <end position="119"/>
    </location>
</feature>
<feature type="strand" evidence="16">
    <location>
        <begin position="120"/>
        <end position="122"/>
    </location>
</feature>
<feature type="helix" evidence="18">
    <location>
        <begin position="126"/>
        <end position="135"/>
    </location>
</feature>
<feature type="helix" evidence="18">
    <location>
        <begin position="137"/>
        <end position="139"/>
    </location>
</feature>
<feature type="helix" evidence="18">
    <location>
        <begin position="142"/>
        <end position="151"/>
    </location>
</feature>
<feature type="strand" evidence="19">
    <location>
        <begin position="158"/>
        <end position="160"/>
    </location>
</feature>
<feature type="helix" evidence="20">
    <location>
        <begin position="163"/>
        <end position="165"/>
    </location>
</feature>
<feature type="helix" evidence="20">
    <location>
        <begin position="166"/>
        <end position="181"/>
    </location>
</feature>
<feature type="strand" evidence="20">
    <location>
        <begin position="186"/>
        <end position="192"/>
    </location>
</feature>
<feature type="strand" evidence="14">
    <location>
        <begin position="202"/>
        <end position="204"/>
    </location>
</feature>
<feature type="helix" evidence="20">
    <location>
        <begin position="211"/>
        <end position="213"/>
    </location>
</feature>
<feature type="helix" evidence="20">
    <location>
        <begin position="215"/>
        <end position="232"/>
    </location>
</feature>
<feature type="turn" evidence="20">
    <location>
        <begin position="233"/>
        <end position="235"/>
    </location>
</feature>
<feature type="strand" evidence="20">
    <location>
        <begin position="238"/>
        <end position="242"/>
    </location>
</feature>
<feature type="strand" evidence="16">
    <location>
        <begin position="244"/>
        <end position="246"/>
    </location>
</feature>
<feature type="helix" evidence="20">
    <location>
        <begin position="247"/>
        <end position="252"/>
    </location>
</feature>
<feature type="helix" evidence="20">
    <location>
        <begin position="257"/>
        <end position="276"/>
    </location>
</feature>
<feature type="strand" evidence="20">
    <location>
        <begin position="282"/>
        <end position="287"/>
    </location>
</feature>
<feature type="helix" evidence="20">
    <location>
        <begin position="291"/>
        <end position="294"/>
    </location>
</feature>
<feature type="helix" evidence="20">
    <location>
        <begin position="297"/>
        <end position="313"/>
    </location>
</feature>
<feature type="strand" evidence="20">
    <location>
        <begin position="320"/>
        <end position="326"/>
    </location>
</feature>
<feature type="helix" evidence="18">
    <location>
        <begin position="340"/>
        <end position="342"/>
    </location>
</feature>
<feature type="helix" evidence="18">
    <location>
        <begin position="350"/>
        <end position="363"/>
    </location>
</feature>
<feature type="strand" evidence="18">
    <location>
        <begin position="370"/>
        <end position="374"/>
    </location>
</feature>
<feature type="strand" evidence="18">
    <location>
        <begin position="379"/>
        <end position="382"/>
    </location>
</feature>
<feature type="strand" evidence="18">
    <location>
        <begin position="392"/>
        <end position="396"/>
    </location>
</feature>
<feature type="strand" evidence="17">
    <location>
        <begin position="403"/>
        <end position="405"/>
    </location>
</feature>
<feature type="strand" evidence="18">
    <location>
        <begin position="410"/>
        <end position="416"/>
    </location>
</feature>
<feature type="strand" evidence="15">
    <location>
        <begin position="432"/>
        <end position="434"/>
    </location>
</feature>
<feature type="helix" evidence="20">
    <location>
        <begin position="437"/>
        <end position="440"/>
    </location>
</feature>
<feature type="helix" evidence="20">
    <location>
        <begin position="456"/>
        <end position="464"/>
    </location>
</feature>
<dbReference type="EC" id="3.2.1.91"/>
<dbReference type="EMBL" id="M16190">
    <property type="protein sequence ID" value="AAA34210.1"/>
    <property type="molecule type" value="Genomic_DNA"/>
</dbReference>
<dbReference type="EMBL" id="M55080">
    <property type="protein sequence ID" value="AAA72922.1"/>
    <property type="molecule type" value="Genomic_DNA"/>
</dbReference>
<dbReference type="PIR" id="A26160">
    <property type="entry name" value="A26160"/>
</dbReference>
<dbReference type="PDB" id="1CB2">
    <property type="method" value="X-ray"/>
    <property type="resolution" value="2.00 A"/>
    <property type="chains" value="A/B=107-471"/>
</dbReference>
<dbReference type="PDB" id="1HGW">
    <property type="method" value="X-ray"/>
    <property type="resolution" value="2.10 A"/>
    <property type="chains" value="A/B=107-471"/>
</dbReference>
<dbReference type="PDB" id="1HGY">
    <property type="method" value="X-ray"/>
    <property type="resolution" value="2.20 A"/>
    <property type="chains" value="A/B=107-471"/>
</dbReference>
<dbReference type="PDB" id="1QJW">
    <property type="method" value="X-ray"/>
    <property type="resolution" value="1.90 A"/>
    <property type="chains" value="A/B=107-471"/>
</dbReference>
<dbReference type="PDB" id="1QK0">
    <property type="method" value="X-ray"/>
    <property type="resolution" value="2.10 A"/>
    <property type="chains" value="A/B=109-471"/>
</dbReference>
<dbReference type="PDB" id="1QK2">
    <property type="method" value="X-ray"/>
    <property type="resolution" value="2.00 A"/>
    <property type="chains" value="A/B=109-471"/>
</dbReference>
<dbReference type="PDB" id="3CBH">
    <property type="method" value="X-ray"/>
    <property type="resolution" value="2.00 A"/>
    <property type="chains" value="A=107-471"/>
</dbReference>
<dbReference type="PDB" id="4AU0">
    <property type="method" value="X-ray"/>
    <property type="resolution" value="1.70 A"/>
    <property type="chains" value="A/B=109-471"/>
</dbReference>
<dbReference type="PDB" id="4AX6">
    <property type="method" value="X-ray"/>
    <property type="resolution" value="2.30 A"/>
    <property type="chains" value="A/B=109-471"/>
</dbReference>
<dbReference type="PDB" id="4AX7">
    <property type="method" value="X-ray"/>
    <property type="resolution" value="1.70 A"/>
    <property type="chains" value="A/B/C/D=109-471"/>
</dbReference>
<dbReference type="PDB" id="4I5R">
    <property type="method" value="X-ray"/>
    <property type="resolution" value="1.50 A"/>
    <property type="chains" value="A=158-331, A=425-471"/>
</dbReference>
<dbReference type="PDB" id="4I5U">
    <property type="method" value="X-ray"/>
    <property type="resolution" value="1.22 A"/>
    <property type="chains" value="A=158-331, A=425-471"/>
</dbReference>
<dbReference type="PDBsum" id="1CB2"/>
<dbReference type="PDBsum" id="1HGW"/>
<dbReference type="PDBsum" id="1HGY"/>
<dbReference type="PDBsum" id="1QJW"/>
<dbReference type="PDBsum" id="1QK0"/>
<dbReference type="PDBsum" id="1QK2"/>
<dbReference type="PDBsum" id="3CBH"/>
<dbReference type="PDBsum" id="4AU0"/>
<dbReference type="PDBsum" id="4AX6"/>
<dbReference type="PDBsum" id="4AX7"/>
<dbReference type="PDBsum" id="4I5R"/>
<dbReference type="PDBsum" id="4I5U"/>
<dbReference type="SMR" id="P07987"/>
<dbReference type="MINT" id="P07987"/>
<dbReference type="CAZy" id="CBM1">
    <property type="family name" value="Carbohydrate-Binding Module Family 1"/>
</dbReference>
<dbReference type="CAZy" id="GH6">
    <property type="family name" value="Glycoside Hydrolase Family 6"/>
</dbReference>
<dbReference type="GlyCosmos" id="P07987">
    <property type="glycosylation" value="9 sites, No reported glycans"/>
</dbReference>
<dbReference type="iPTMnet" id="P07987"/>
<dbReference type="VEuPathDB" id="FungiDB:TrQ_010160"/>
<dbReference type="OMA" id="EVHTLAM"/>
<dbReference type="BRENDA" id="3.2.1.176">
    <property type="organism ID" value="6451"/>
</dbReference>
<dbReference type="BRENDA" id="3.2.1.91">
    <property type="organism ID" value="6451"/>
</dbReference>
<dbReference type="CD-CODE" id="9321DD1F">
    <property type="entry name" value="Synthetic Condensate 000162"/>
</dbReference>
<dbReference type="EvolutionaryTrace" id="P07987"/>
<dbReference type="GO" id="GO:0005576">
    <property type="term" value="C:extracellular region"/>
    <property type="evidence" value="ECO:0007669"/>
    <property type="project" value="UniProtKB-SubCell"/>
</dbReference>
<dbReference type="GO" id="GO:0016162">
    <property type="term" value="F:cellulose 1,4-beta-cellobiosidase activity"/>
    <property type="evidence" value="ECO:0007669"/>
    <property type="project" value="UniProtKB-EC"/>
</dbReference>
<dbReference type="GO" id="GO:0030248">
    <property type="term" value="F:cellulose binding"/>
    <property type="evidence" value="ECO:0007669"/>
    <property type="project" value="InterPro"/>
</dbReference>
<dbReference type="GO" id="GO:0042802">
    <property type="term" value="F:identical protein binding"/>
    <property type="evidence" value="ECO:0000353"/>
    <property type="project" value="IntAct"/>
</dbReference>
<dbReference type="GO" id="GO:0030245">
    <property type="term" value="P:cellulose catabolic process"/>
    <property type="evidence" value="ECO:0007669"/>
    <property type="project" value="UniProtKB-KW"/>
</dbReference>
<dbReference type="FunFam" id="3.20.20.40:FF:000001">
    <property type="entry name" value="Glucanase"/>
    <property type="match status" value="1"/>
</dbReference>
<dbReference type="Gene3D" id="3.20.20.40">
    <property type="entry name" value="1, 4-beta cellobiohydrolase"/>
    <property type="match status" value="1"/>
</dbReference>
<dbReference type="InterPro" id="IPR016288">
    <property type="entry name" value="Beta_cellobiohydrolase"/>
</dbReference>
<dbReference type="InterPro" id="IPR036434">
    <property type="entry name" value="Beta_cellobiohydrolase_sf"/>
</dbReference>
<dbReference type="InterPro" id="IPR035971">
    <property type="entry name" value="CBD_sf"/>
</dbReference>
<dbReference type="InterPro" id="IPR000254">
    <property type="entry name" value="Cellulose-bd_dom_fun"/>
</dbReference>
<dbReference type="InterPro" id="IPR001524">
    <property type="entry name" value="Glyco_hydro_6_CS"/>
</dbReference>
<dbReference type="PANTHER" id="PTHR34876">
    <property type="match status" value="1"/>
</dbReference>
<dbReference type="PANTHER" id="PTHR34876:SF4">
    <property type="entry name" value="1,4-BETA-D-GLUCAN CELLOBIOHYDROLASE C-RELATED"/>
    <property type="match status" value="1"/>
</dbReference>
<dbReference type="Pfam" id="PF00734">
    <property type="entry name" value="CBM_1"/>
    <property type="match status" value="1"/>
</dbReference>
<dbReference type="Pfam" id="PF01341">
    <property type="entry name" value="Glyco_hydro_6"/>
    <property type="match status" value="1"/>
</dbReference>
<dbReference type="PIRSF" id="PIRSF001100">
    <property type="entry name" value="Beta_cellobiohydrolase"/>
    <property type="match status" value="1"/>
</dbReference>
<dbReference type="PRINTS" id="PR00733">
    <property type="entry name" value="GLHYDRLASE6"/>
</dbReference>
<dbReference type="SMART" id="SM00236">
    <property type="entry name" value="fCBD"/>
    <property type="match status" value="1"/>
</dbReference>
<dbReference type="SUPFAM" id="SSF57180">
    <property type="entry name" value="Cellulose-binding domain"/>
    <property type="match status" value="1"/>
</dbReference>
<dbReference type="SUPFAM" id="SSF51989">
    <property type="entry name" value="Glycosyl hydrolases family 6, cellulases"/>
    <property type="match status" value="1"/>
</dbReference>
<dbReference type="PROSITE" id="PS00562">
    <property type="entry name" value="CBM1_1"/>
    <property type="match status" value="1"/>
</dbReference>
<dbReference type="PROSITE" id="PS51164">
    <property type="entry name" value="CBM1_2"/>
    <property type="match status" value="1"/>
</dbReference>
<dbReference type="PROSITE" id="PS00655">
    <property type="entry name" value="GLYCOSYL_HYDROL_F6_1"/>
    <property type="match status" value="1"/>
</dbReference>
<dbReference type="PROSITE" id="PS00656">
    <property type="entry name" value="GLYCOSYL_HYDROL_F6_2"/>
    <property type="match status" value="1"/>
</dbReference>
<evidence type="ECO:0000250" key="1">
    <source>
        <dbReference type="UniProtKB" id="A0A024SH76"/>
    </source>
</evidence>
<evidence type="ECO:0000255" key="2"/>
<evidence type="ECO:0000255" key="3">
    <source>
        <dbReference type="PROSITE-ProRule" id="PRU00597"/>
    </source>
</evidence>
<evidence type="ECO:0000256" key="4">
    <source>
        <dbReference type="SAM" id="MobiDB-lite"/>
    </source>
</evidence>
<evidence type="ECO:0000269" key="5">
    <source>
    </source>
</evidence>
<evidence type="ECO:0000269" key="6">
    <source>
    </source>
</evidence>
<evidence type="ECO:0000269" key="7">
    <source>
    </source>
</evidence>
<evidence type="ECO:0000269" key="8">
    <source ref="2"/>
</evidence>
<evidence type="ECO:0000269" key="9">
    <source ref="3"/>
</evidence>
<evidence type="ECO:0000305" key="10"/>
<evidence type="ECO:0000305" key="11">
    <source>
    </source>
</evidence>
<evidence type="ECO:0007744" key="12">
    <source>
        <dbReference type="PDB" id="1HGW"/>
    </source>
</evidence>
<evidence type="ECO:0007744" key="13">
    <source>
        <dbReference type="PDB" id="1HGY"/>
    </source>
</evidence>
<evidence type="ECO:0007829" key="14">
    <source>
        <dbReference type="PDB" id="1CB2"/>
    </source>
</evidence>
<evidence type="ECO:0007829" key="15">
    <source>
        <dbReference type="PDB" id="1HGY"/>
    </source>
</evidence>
<evidence type="ECO:0007829" key="16">
    <source>
        <dbReference type="PDB" id="1QJW"/>
    </source>
</evidence>
<evidence type="ECO:0007829" key="17">
    <source>
        <dbReference type="PDB" id="1QK2"/>
    </source>
</evidence>
<evidence type="ECO:0007829" key="18">
    <source>
        <dbReference type="PDB" id="4AU0"/>
    </source>
</evidence>
<evidence type="ECO:0007829" key="19">
    <source>
        <dbReference type="PDB" id="4I5R"/>
    </source>
</evidence>
<evidence type="ECO:0007829" key="20">
    <source>
        <dbReference type="PDB" id="4I5U"/>
    </source>
</evidence>
<keyword id="KW-0002">3D-structure</keyword>
<keyword id="KW-0119">Carbohydrate metabolism</keyword>
<keyword id="KW-0136">Cellulose degradation</keyword>
<keyword id="KW-0903">Direct protein sequencing</keyword>
<keyword id="KW-1015">Disulfide bond</keyword>
<keyword id="KW-0325">Glycoprotein</keyword>
<keyword id="KW-0326">Glycosidase</keyword>
<keyword id="KW-0378">Hydrolase</keyword>
<keyword id="KW-0624">Polysaccharide degradation</keyword>
<keyword id="KW-0873">Pyrrolidone carboxylic acid</keyword>
<keyword id="KW-0964">Secreted</keyword>
<keyword id="KW-0732">Signal</keyword>
<name>GUX2_HYPJE</name>
<protein>
    <recommendedName>
        <fullName>Exoglucanase 2</fullName>
        <ecNumber>3.2.1.91</ecNumber>
    </recommendedName>
    <alternativeName>
        <fullName>1,4-beta-cellobiohydrolase</fullName>
    </alternativeName>
    <alternativeName>
        <fullName>Cellobiohydrolase 6A</fullName>
        <shortName>Cel6A</shortName>
    </alternativeName>
    <alternativeName>
        <fullName>Exocellobiohydrolase II</fullName>
        <shortName>CBHII</shortName>
    </alternativeName>
    <alternativeName>
        <fullName>Exoglucanase II</fullName>
    </alternativeName>
</protein>
<reference key="1">
    <citation type="journal article" date="1987" name="Gene">
        <title>Homologous domains in Trichoderma reesei cellulolytic enzymes: gene sequence and expression of cellobiohydrolase II.</title>
        <authorList>
            <person name="Teeri T.T."/>
            <person name="Lehtovaara P."/>
            <person name="Kauppinen S."/>
            <person name="Salovuori I."/>
            <person name="Knowles J."/>
        </authorList>
    </citation>
    <scope>NUCLEOTIDE SEQUENCE [GENOMIC DNA]</scope>
    <source>
        <strain>VTT-D-80133</strain>
    </source>
</reference>
<reference key="2">
    <citation type="journal article" date="1987" name="Biotechnology (N.Y.)">
        <title>Nucleotide sequence and deduced primary structure of cellobiohydrolase II from Trichoderma reesei.</title>
        <authorList>
            <person name="Chen C.M."/>
            <person name="Gritzali M."/>
            <person name="Stafford D.W."/>
        </authorList>
    </citation>
    <scope>NUCLEOTIDE SEQUENCE [GENOMIC DNA]</scope>
    <source>
        <strain>ATCC 26921 / CBS 392.92 / QM9414</strain>
    </source>
</reference>
<reference key="3">
    <citation type="journal article" date="1980" name="FEBS Lett.">
        <title>The 1,4-beta-glucan cellobiohydrolases of Trichoderma reesei QM 9414.</title>
        <authorList>
            <person name="Faegerstam L.G."/>
            <person name="Pettersson L.G."/>
        </authorList>
    </citation>
    <scope>PROTEIN SEQUENCE OF 25-44</scope>
    <scope>PYROGLUTAMATE FORMATION AT GLN-25</scope>
    <scope>FUNCTION</scope>
    <scope>CATALYTIC ACTIVITY</scope>
    <scope>SUBCELLULAR LOCATION</scope>
    <source>
        <strain>ATCC 26921 / CBS 392.92 / QM9414</strain>
    </source>
</reference>
<reference key="4">
    <citation type="journal article" date="1990" name="Science">
        <title>Three-dimensional structure of cellobiohydrolase II from Trichoderma reesei.</title>
        <authorList>
            <person name="Rouvinen J."/>
            <person name="Bergfors T."/>
            <person name="Teeri T.T."/>
            <person name="Knowles J.K.C."/>
            <person name="Jones T.A."/>
        </authorList>
    </citation>
    <scope>X-RAY CRYSTALLOGRAPHY (2.0 ANGSTROMS) OF 107-471</scope>
    <scope>MUTAGENESIS OF ASP-199 AND ASP-245</scope>
</reference>
<reference key="5">
    <citation type="journal article" date="1996" name="Protein Eng.">
        <title>The active site of Trichoderma reesei cellobiohydrolase II: the role of tyrosine 169.</title>
        <authorList>
            <person name="Koivula A."/>
            <person name="Reinikainen T."/>
            <person name="Ruohonen L."/>
            <person name="Valkeajaervi A."/>
            <person name="Claeyssens M."/>
            <person name="Teleman O."/>
            <person name="Kleywegt G.J."/>
            <person name="Szardenings M."/>
            <person name="Rouvinen J."/>
            <person name="Jones T.A."/>
            <person name="Teeri T.T."/>
        </authorList>
    </citation>
    <scope>X-RAY CRYSTALLOGRAPHY (2.0 ANGSTROMS) OF 107-471</scope>
    <scope>DISULFIDE BONDS</scope>
    <scope>GLYCOSYLATION AT THR-111; THR-121; SER-130; SER-133; SER-134; SER-139; THR-146; ASN-313 AND ASN-334</scope>
</reference>
<reference evidence="12 13" key="6">
    <citation type="journal article" date="2002" name="J. Am. Chem. Soc.">
        <title>The active site of cellobiohydrolase Cel6A from Trichoderma reesei: the roles of aspartic acids D221 and D175.</title>
        <authorList>
            <person name="Koivula A."/>
            <person name="Ruohonen L."/>
            <person name="Wohlfahrt G."/>
            <person name="Reinikainen T."/>
            <person name="Teeri T.T."/>
            <person name="Piens K."/>
            <person name="Claeyssens M."/>
            <person name="Weber M."/>
            <person name="Vasella A."/>
            <person name="Becker D."/>
            <person name="Sinnott M.L."/>
            <person name="Zou J.Y."/>
            <person name="Kleywegt G.J."/>
            <person name="Szardenings M."/>
            <person name="Stahlberg J."/>
            <person name="Jones T.A."/>
        </authorList>
    </citation>
    <scope>X-RAY CRYSTALLOGRAPHY (2.10 ANGSTROMS) OF 107-471</scope>
    <scope>ACTIVE SITE</scope>
    <scope>GLYCOSYLATION AT THR-111; THR-121; SER-130; SER-133; SER-134; SER-139; THR-146; ASN-313 AND ASN-334</scope>
    <scope>DISULFIDE BONDS</scope>
    <scope>BIOPHYSICOCHEMICAL PROPERTIES</scope>
</reference>
<accession>P07987</accession>
<gene>
    <name type="primary">cbh2</name>
</gene>